<evidence type="ECO:0000255" key="1">
    <source>
        <dbReference type="HAMAP-Rule" id="MF_01565"/>
    </source>
</evidence>
<feature type="chain" id="PRO_1000185453" description="Zinc transport protein ZntB">
    <location>
        <begin position="1"/>
        <end position="327"/>
    </location>
</feature>
<feature type="topological domain" description="Cytoplasmic" evidence="1">
    <location>
        <begin position="1"/>
        <end position="273"/>
    </location>
</feature>
<feature type="transmembrane region" description="Helical" evidence="1">
    <location>
        <begin position="274"/>
        <end position="294"/>
    </location>
</feature>
<feature type="topological domain" description="Periplasmic" evidence="1">
    <location>
        <begin position="295"/>
        <end position="300"/>
    </location>
</feature>
<feature type="transmembrane region" description="Helical" evidence="1">
    <location>
        <begin position="301"/>
        <end position="321"/>
    </location>
</feature>
<feature type="topological domain" description="Cytoplasmic" evidence="1">
    <location>
        <begin position="322"/>
        <end position="327"/>
    </location>
</feature>
<gene>
    <name evidence="1" type="primary">zntB</name>
    <name type="ordered locus">ECED1_1552</name>
</gene>
<keyword id="KW-0997">Cell inner membrane</keyword>
<keyword id="KW-1003">Cell membrane</keyword>
<keyword id="KW-0406">Ion transport</keyword>
<keyword id="KW-0472">Membrane</keyword>
<keyword id="KW-0812">Transmembrane</keyword>
<keyword id="KW-1133">Transmembrane helix</keyword>
<keyword id="KW-0813">Transport</keyword>
<keyword id="KW-0862">Zinc</keyword>
<dbReference type="EMBL" id="CU928162">
    <property type="protein sequence ID" value="CAR07750.2"/>
    <property type="molecule type" value="Genomic_DNA"/>
</dbReference>
<dbReference type="RefSeq" id="WP_000387388.1">
    <property type="nucleotide sequence ID" value="NC_011745.1"/>
</dbReference>
<dbReference type="SMR" id="B7MUI4"/>
<dbReference type="GeneID" id="93775479"/>
<dbReference type="KEGG" id="ecq:ECED1_1552"/>
<dbReference type="HOGENOM" id="CLU_007127_2_0_6"/>
<dbReference type="Proteomes" id="UP000000748">
    <property type="component" value="Chromosome"/>
</dbReference>
<dbReference type="GO" id="GO:0005886">
    <property type="term" value="C:plasma membrane"/>
    <property type="evidence" value="ECO:0007669"/>
    <property type="project" value="UniProtKB-SubCell"/>
</dbReference>
<dbReference type="GO" id="GO:0050897">
    <property type="term" value="F:cobalt ion binding"/>
    <property type="evidence" value="ECO:0007669"/>
    <property type="project" value="TreeGrafter"/>
</dbReference>
<dbReference type="GO" id="GO:0015087">
    <property type="term" value="F:cobalt ion transmembrane transporter activity"/>
    <property type="evidence" value="ECO:0007669"/>
    <property type="project" value="TreeGrafter"/>
</dbReference>
<dbReference type="GO" id="GO:0000287">
    <property type="term" value="F:magnesium ion binding"/>
    <property type="evidence" value="ECO:0007669"/>
    <property type="project" value="TreeGrafter"/>
</dbReference>
<dbReference type="GO" id="GO:0015095">
    <property type="term" value="F:magnesium ion transmembrane transporter activity"/>
    <property type="evidence" value="ECO:0007669"/>
    <property type="project" value="TreeGrafter"/>
</dbReference>
<dbReference type="GO" id="GO:0005385">
    <property type="term" value="F:zinc ion transmembrane transporter activity"/>
    <property type="evidence" value="ECO:0007669"/>
    <property type="project" value="UniProtKB-UniRule"/>
</dbReference>
<dbReference type="CDD" id="cd12833">
    <property type="entry name" value="ZntB-like_1"/>
    <property type="match status" value="1"/>
</dbReference>
<dbReference type="FunFam" id="1.20.58.340:FF:000002">
    <property type="entry name" value="Zinc transport protein ZntB"/>
    <property type="match status" value="1"/>
</dbReference>
<dbReference type="FunFam" id="1.20.58.340:FF:000003">
    <property type="entry name" value="Zinc transport protein ZntB"/>
    <property type="match status" value="1"/>
</dbReference>
<dbReference type="FunFam" id="3.30.460.20:FF:000001">
    <property type="entry name" value="Zinc transport protein ZntB"/>
    <property type="match status" value="1"/>
</dbReference>
<dbReference type="Gene3D" id="3.30.460.20">
    <property type="entry name" value="CorA soluble domain-like"/>
    <property type="match status" value="1"/>
</dbReference>
<dbReference type="Gene3D" id="1.20.58.340">
    <property type="entry name" value="Magnesium transport protein CorA, transmembrane region"/>
    <property type="match status" value="2"/>
</dbReference>
<dbReference type="HAMAP" id="MF_01565">
    <property type="entry name" value="ZntB"/>
    <property type="match status" value="1"/>
</dbReference>
<dbReference type="InterPro" id="IPR045861">
    <property type="entry name" value="CorA_cytoplasmic_dom"/>
</dbReference>
<dbReference type="InterPro" id="IPR045863">
    <property type="entry name" value="CorA_TM1_TM2"/>
</dbReference>
<dbReference type="InterPro" id="IPR002523">
    <property type="entry name" value="MgTranspt_CorA/ZnTranspt_ZntB"/>
</dbReference>
<dbReference type="InterPro" id="IPR023714">
    <property type="entry name" value="Zn_transp_ZntB"/>
</dbReference>
<dbReference type="NCBIfam" id="NF007092">
    <property type="entry name" value="PRK09546.1"/>
    <property type="match status" value="1"/>
</dbReference>
<dbReference type="PANTHER" id="PTHR46494">
    <property type="entry name" value="CORA FAMILY METAL ION TRANSPORTER (EUROFUNG)"/>
    <property type="match status" value="1"/>
</dbReference>
<dbReference type="PANTHER" id="PTHR46494:SF3">
    <property type="entry name" value="ZINC TRANSPORT PROTEIN ZNTB"/>
    <property type="match status" value="1"/>
</dbReference>
<dbReference type="Pfam" id="PF01544">
    <property type="entry name" value="CorA"/>
    <property type="match status" value="1"/>
</dbReference>
<dbReference type="SUPFAM" id="SSF143865">
    <property type="entry name" value="CorA soluble domain-like"/>
    <property type="match status" value="1"/>
</dbReference>
<dbReference type="SUPFAM" id="SSF144083">
    <property type="entry name" value="Magnesium transport protein CorA, transmembrane region"/>
    <property type="match status" value="1"/>
</dbReference>
<proteinExistence type="inferred from homology"/>
<name>ZNTB_ECO81</name>
<reference key="1">
    <citation type="journal article" date="2009" name="PLoS Genet.">
        <title>Organised genome dynamics in the Escherichia coli species results in highly diverse adaptive paths.</title>
        <authorList>
            <person name="Touchon M."/>
            <person name="Hoede C."/>
            <person name="Tenaillon O."/>
            <person name="Barbe V."/>
            <person name="Baeriswyl S."/>
            <person name="Bidet P."/>
            <person name="Bingen E."/>
            <person name="Bonacorsi S."/>
            <person name="Bouchier C."/>
            <person name="Bouvet O."/>
            <person name="Calteau A."/>
            <person name="Chiapello H."/>
            <person name="Clermont O."/>
            <person name="Cruveiller S."/>
            <person name="Danchin A."/>
            <person name="Diard M."/>
            <person name="Dossat C."/>
            <person name="Karoui M.E."/>
            <person name="Frapy E."/>
            <person name="Garry L."/>
            <person name="Ghigo J.M."/>
            <person name="Gilles A.M."/>
            <person name="Johnson J."/>
            <person name="Le Bouguenec C."/>
            <person name="Lescat M."/>
            <person name="Mangenot S."/>
            <person name="Martinez-Jehanne V."/>
            <person name="Matic I."/>
            <person name="Nassif X."/>
            <person name="Oztas S."/>
            <person name="Petit M.A."/>
            <person name="Pichon C."/>
            <person name="Rouy Z."/>
            <person name="Ruf C.S."/>
            <person name="Schneider D."/>
            <person name="Tourret J."/>
            <person name="Vacherie B."/>
            <person name="Vallenet D."/>
            <person name="Medigue C."/>
            <person name="Rocha E.P.C."/>
            <person name="Denamur E."/>
        </authorList>
    </citation>
    <scope>NUCLEOTIDE SEQUENCE [LARGE SCALE GENOMIC DNA]</scope>
    <source>
        <strain>ED1a</strain>
    </source>
</reference>
<organism>
    <name type="scientific">Escherichia coli O81 (strain ED1a)</name>
    <dbReference type="NCBI Taxonomy" id="585397"/>
    <lineage>
        <taxon>Bacteria</taxon>
        <taxon>Pseudomonadati</taxon>
        <taxon>Pseudomonadota</taxon>
        <taxon>Gammaproteobacteria</taxon>
        <taxon>Enterobacterales</taxon>
        <taxon>Enterobacteriaceae</taxon>
        <taxon>Escherichia</taxon>
    </lineage>
</organism>
<sequence>MEAIKGSDVNVPDAVFAWMLDGRGGVKPLENTDVIDEAHPCWLHLNYVHHDSAQWLATTPLLPNNVRDALAGESTRPRVSRLGEGTLITLRCINGSTDERPDQLVAMRVYMDGRLIVSTRQRKVLALDDVVSDLEEGTGPTDCGGWLVDVCDALTDHSSEFIEQLHDKIIDLEDNLLDQQIPPRGFLALLRKQLIVMRRYMAPQRDVYARLASERLPWMSDDQRRRMQDIADRLGRGLDEIDACIARTGVMADEIAQVMQENLARRTYTMSLMAMVFLPSTFLTGLFGVNLGGIPGGGWQFGFSIFCILLVVLIGGVALWLHRSKWL</sequence>
<protein>
    <recommendedName>
        <fullName evidence="1">Zinc transport protein ZntB</fullName>
    </recommendedName>
</protein>
<comment type="function">
    <text evidence="1">Zinc transporter. Acts as a Zn(2+):proton symporter, which likely mediates zinc ion uptake.</text>
</comment>
<comment type="catalytic activity">
    <reaction evidence="1">
        <text>Zn(2+)(out) + H(+)(out) = Zn(2+)(in) + H(+)(in)</text>
        <dbReference type="Rhea" id="RHEA:71195"/>
        <dbReference type="ChEBI" id="CHEBI:15378"/>
        <dbReference type="ChEBI" id="CHEBI:29105"/>
    </reaction>
    <physiologicalReaction direction="left-to-right" evidence="1">
        <dbReference type="Rhea" id="RHEA:71196"/>
    </physiologicalReaction>
</comment>
<comment type="subcellular location">
    <subcellularLocation>
        <location evidence="1">Cell inner membrane</location>
        <topology evidence="1">Multi-pass membrane protein</topology>
    </subcellularLocation>
</comment>
<comment type="similarity">
    <text evidence="1">Belongs to the CorA metal ion transporter (MIT) (TC 1.A.35) family.</text>
</comment>
<accession>B7MUI4</accession>